<proteinExistence type="inferred from homology"/>
<keyword id="KW-0414">Isoprene biosynthesis</keyword>
<keyword id="KW-0456">Lyase</keyword>
<keyword id="KW-0479">Metal-binding</keyword>
<keyword id="KW-1185">Reference proteome</keyword>
<organism>
    <name type="scientific">Halothermothrix orenii (strain H 168 / OCM 544 / DSM 9562)</name>
    <dbReference type="NCBI Taxonomy" id="373903"/>
    <lineage>
        <taxon>Bacteria</taxon>
        <taxon>Bacillati</taxon>
        <taxon>Bacillota</taxon>
        <taxon>Clostridia</taxon>
        <taxon>Halanaerobiales</taxon>
        <taxon>Halothermotrichaceae</taxon>
        <taxon>Halothermothrix</taxon>
    </lineage>
</organism>
<accession>B8D0A0</accession>
<feature type="chain" id="PRO_1000190712" description="2-C-methyl-D-erythritol 2,4-cyclodiphosphate synthase">
    <location>
        <begin position="1"/>
        <end position="165"/>
    </location>
</feature>
<feature type="binding site" evidence="1">
    <location>
        <begin position="8"/>
        <end position="10"/>
    </location>
    <ligand>
        <name>4-CDP-2-C-methyl-D-erythritol 2-phosphate</name>
        <dbReference type="ChEBI" id="CHEBI:57919"/>
    </ligand>
</feature>
<feature type="binding site" evidence="1">
    <location>
        <position position="8"/>
    </location>
    <ligand>
        <name>a divalent metal cation</name>
        <dbReference type="ChEBI" id="CHEBI:60240"/>
    </ligand>
</feature>
<feature type="binding site" evidence="1">
    <location>
        <position position="10"/>
    </location>
    <ligand>
        <name>a divalent metal cation</name>
        <dbReference type="ChEBI" id="CHEBI:60240"/>
    </ligand>
</feature>
<feature type="binding site" evidence="1">
    <location>
        <begin position="34"/>
        <end position="35"/>
    </location>
    <ligand>
        <name>4-CDP-2-C-methyl-D-erythritol 2-phosphate</name>
        <dbReference type="ChEBI" id="CHEBI:57919"/>
    </ligand>
</feature>
<feature type="binding site" evidence="1">
    <location>
        <position position="42"/>
    </location>
    <ligand>
        <name>a divalent metal cation</name>
        <dbReference type="ChEBI" id="CHEBI:60240"/>
    </ligand>
</feature>
<feature type="binding site" evidence="1">
    <location>
        <begin position="56"/>
        <end position="58"/>
    </location>
    <ligand>
        <name>4-CDP-2-C-methyl-D-erythritol 2-phosphate</name>
        <dbReference type="ChEBI" id="CHEBI:57919"/>
    </ligand>
</feature>
<feature type="binding site" evidence="1">
    <location>
        <begin position="61"/>
        <end position="65"/>
    </location>
    <ligand>
        <name>4-CDP-2-C-methyl-D-erythritol 2-phosphate</name>
        <dbReference type="ChEBI" id="CHEBI:57919"/>
    </ligand>
</feature>
<feature type="binding site" evidence="1">
    <location>
        <begin position="132"/>
        <end position="135"/>
    </location>
    <ligand>
        <name>4-CDP-2-C-methyl-D-erythritol 2-phosphate</name>
        <dbReference type="ChEBI" id="CHEBI:57919"/>
    </ligand>
</feature>
<feature type="binding site" evidence="1">
    <location>
        <position position="139"/>
    </location>
    <ligand>
        <name>4-CDP-2-C-methyl-D-erythritol 2-phosphate</name>
        <dbReference type="ChEBI" id="CHEBI:57919"/>
    </ligand>
</feature>
<feature type="binding site" evidence="1">
    <location>
        <position position="142"/>
    </location>
    <ligand>
        <name>4-CDP-2-C-methyl-D-erythritol 2-phosphate</name>
        <dbReference type="ChEBI" id="CHEBI:57919"/>
    </ligand>
</feature>
<feature type="site" description="Transition state stabilizer" evidence="1">
    <location>
        <position position="34"/>
    </location>
</feature>
<feature type="site" description="Transition state stabilizer" evidence="1">
    <location>
        <position position="133"/>
    </location>
</feature>
<reference key="1">
    <citation type="journal article" date="2009" name="PLoS ONE">
        <title>Genome analysis of the anaerobic thermohalophilic bacterium Halothermothrix orenii.</title>
        <authorList>
            <person name="Mavromatis K."/>
            <person name="Ivanova N."/>
            <person name="Anderson I."/>
            <person name="Lykidis A."/>
            <person name="Hooper S.D."/>
            <person name="Sun H."/>
            <person name="Kunin V."/>
            <person name="Lapidus A."/>
            <person name="Hugenholtz P."/>
            <person name="Patel B."/>
            <person name="Kyrpides N.C."/>
        </authorList>
    </citation>
    <scope>NUCLEOTIDE SEQUENCE [LARGE SCALE GENOMIC DNA]</scope>
    <source>
        <strain>H 168 / OCM 544 / DSM 9562</strain>
    </source>
</reference>
<evidence type="ECO:0000255" key="1">
    <source>
        <dbReference type="HAMAP-Rule" id="MF_00107"/>
    </source>
</evidence>
<protein>
    <recommendedName>
        <fullName evidence="1">2-C-methyl-D-erythritol 2,4-cyclodiphosphate synthase</fullName>
        <shortName evidence="1">MECDP-synthase</shortName>
        <shortName evidence="1">MECPP-synthase</shortName>
        <shortName evidence="1">MECPS</shortName>
        <ecNumber evidence="1">4.6.1.12</ecNumber>
    </recommendedName>
</protein>
<comment type="function">
    <text evidence="1">Involved in the biosynthesis of isopentenyl diphosphate (IPP) and dimethylallyl diphosphate (DMAPP), two major building blocks of isoprenoid compounds. Catalyzes the conversion of 4-diphosphocytidyl-2-C-methyl-D-erythritol 2-phosphate (CDP-ME2P) to 2-C-methyl-D-erythritol 2,4-cyclodiphosphate (ME-CPP) with a corresponding release of cytidine 5-monophosphate (CMP).</text>
</comment>
<comment type="catalytic activity">
    <reaction evidence="1">
        <text>4-CDP-2-C-methyl-D-erythritol 2-phosphate = 2-C-methyl-D-erythritol 2,4-cyclic diphosphate + CMP</text>
        <dbReference type="Rhea" id="RHEA:23864"/>
        <dbReference type="ChEBI" id="CHEBI:57919"/>
        <dbReference type="ChEBI" id="CHEBI:58483"/>
        <dbReference type="ChEBI" id="CHEBI:60377"/>
        <dbReference type="EC" id="4.6.1.12"/>
    </reaction>
</comment>
<comment type="cofactor">
    <cofactor evidence="1">
        <name>a divalent metal cation</name>
        <dbReference type="ChEBI" id="CHEBI:60240"/>
    </cofactor>
    <text evidence="1">Binds 1 divalent metal cation per subunit.</text>
</comment>
<comment type="pathway">
    <text evidence="1">Isoprenoid biosynthesis; isopentenyl diphosphate biosynthesis via DXP pathway; isopentenyl diphosphate from 1-deoxy-D-xylulose 5-phosphate: step 4/6.</text>
</comment>
<comment type="subunit">
    <text evidence="1">Homotrimer.</text>
</comment>
<comment type="similarity">
    <text evidence="1">Belongs to the IspF family.</text>
</comment>
<sequence>MRIGIGFDVHPLKKGETLILGGVHIQGEYGLAGHSDADVLTHALMDAILGAMGEADIGYHFPDTDPSYRGISSLKLLKKVYNMMKPRGFSIGNIDLIIMAQSPKLSPYYNKIKENYTRILQLDSSRINIKATTTENLGFVGREEGIAAQAAVLLIDTKEGDINAG</sequence>
<name>ISPF_HALOH</name>
<gene>
    <name evidence="1" type="primary">ispF</name>
    <name type="ordered locus">Hore_00930</name>
</gene>
<dbReference type="EC" id="4.6.1.12" evidence="1"/>
<dbReference type="EMBL" id="CP001098">
    <property type="protein sequence ID" value="ACL68854.1"/>
    <property type="molecule type" value="Genomic_DNA"/>
</dbReference>
<dbReference type="RefSeq" id="WP_012635053.1">
    <property type="nucleotide sequence ID" value="NC_011899.1"/>
</dbReference>
<dbReference type="SMR" id="B8D0A0"/>
<dbReference type="STRING" id="373903.Hore_00930"/>
<dbReference type="KEGG" id="hor:Hore_00930"/>
<dbReference type="eggNOG" id="COG0245">
    <property type="taxonomic scope" value="Bacteria"/>
</dbReference>
<dbReference type="HOGENOM" id="CLU_084630_2_0_9"/>
<dbReference type="OrthoDB" id="9804336at2"/>
<dbReference type="UniPathway" id="UPA00056">
    <property type="reaction ID" value="UER00095"/>
</dbReference>
<dbReference type="Proteomes" id="UP000000719">
    <property type="component" value="Chromosome"/>
</dbReference>
<dbReference type="GO" id="GO:0008685">
    <property type="term" value="F:2-C-methyl-D-erythritol 2,4-cyclodiphosphate synthase activity"/>
    <property type="evidence" value="ECO:0007669"/>
    <property type="project" value="UniProtKB-UniRule"/>
</dbReference>
<dbReference type="GO" id="GO:0046872">
    <property type="term" value="F:metal ion binding"/>
    <property type="evidence" value="ECO:0007669"/>
    <property type="project" value="UniProtKB-KW"/>
</dbReference>
<dbReference type="GO" id="GO:0019288">
    <property type="term" value="P:isopentenyl diphosphate biosynthetic process, methylerythritol 4-phosphate pathway"/>
    <property type="evidence" value="ECO:0007669"/>
    <property type="project" value="UniProtKB-UniRule"/>
</dbReference>
<dbReference type="GO" id="GO:0016114">
    <property type="term" value="P:terpenoid biosynthetic process"/>
    <property type="evidence" value="ECO:0007669"/>
    <property type="project" value="InterPro"/>
</dbReference>
<dbReference type="CDD" id="cd00554">
    <property type="entry name" value="MECDP_synthase"/>
    <property type="match status" value="1"/>
</dbReference>
<dbReference type="FunFam" id="3.30.1330.50:FF:000003">
    <property type="entry name" value="2-C-methyl-D-erythritol 2,4-cyclodiphosphate synthase"/>
    <property type="match status" value="1"/>
</dbReference>
<dbReference type="Gene3D" id="3.30.1330.50">
    <property type="entry name" value="2-C-methyl-D-erythritol 2,4-cyclodiphosphate synthase"/>
    <property type="match status" value="1"/>
</dbReference>
<dbReference type="HAMAP" id="MF_00107">
    <property type="entry name" value="IspF"/>
    <property type="match status" value="1"/>
</dbReference>
<dbReference type="InterPro" id="IPR003526">
    <property type="entry name" value="MECDP_synthase"/>
</dbReference>
<dbReference type="InterPro" id="IPR020555">
    <property type="entry name" value="MECDP_synthase_CS"/>
</dbReference>
<dbReference type="InterPro" id="IPR036571">
    <property type="entry name" value="MECDP_synthase_sf"/>
</dbReference>
<dbReference type="NCBIfam" id="TIGR00151">
    <property type="entry name" value="ispF"/>
    <property type="match status" value="1"/>
</dbReference>
<dbReference type="PANTHER" id="PTHR43181">
    <property type="entry name" value="2-C-METHYL-D-ERYTHRITOL 2,4-CYCLODIPHOSPHATE SYNTHASE, CHLOROPLASTIC"/>
    <property type="match status" value="1"/>
</dbReference>
<dbReference type="PANTHER" id="PTHR43181:SF1">
    <property type="entry name" value="2-C-METHYL-D-ERYTHRITOL 2,4-CYCLODIPHOSPHATE SYNTHASE, CHLOROPLASTIC"/>
    <property type="match status" value="1"/>
</dbReference>
<dbReference type="Pfam" id="PF02542">
    <property type="entry name" value="YgbB"/>
    <property type="match status" value="1"/>
</dbReference>
<dbReference type="SUPFAM" id="SSF69765">
    <property type="entry name" value="IpsF-like"/>
    <property type="match status" value="1"/>
</dbReference>
<dbReference type="PROSITE" id="PS01350">
    <property type="entry name" value="ISPF"/>
    <property type="match status" value="1"/>
</dbReference>